<feature type="chain" id="PRO_1000164315" description="tRNA(Ile)-lysidine synthase">
    <location>
        <begin position="1"/>
        <end position="445"/>
    </location>
</feature>
<feature type="binding site" evidence="1">
    <location>
        <begin position="30"/>
        <end position="35"/>
    </location>
    <ligand>
        <name>ATP</name>
        <dbReference type="ChEBI" id="CHEBI:30616"/>
    </ligand>
</feature>
<reference key="1">
    <citation type="submission" date="2006-08" db="EMBL/GenBank/DDBJ databases">
        <title>Complete sequence of Alkalilimnicola ehrilichei MLHE-1.</title>
        <authorList>
            <person name="Copeland A."/>
            <person name="Lucas S."/>
            <person name="Lapidus A."/>
            <person name="Barry K."/>
            <person name="Detter J.C."/>
            <person name="Glavina del Rio T."/>
            <person name="Hammon N."/>
            <person name="Israni S."/>
            <person name="Dalin E."/>
            <person name="Tice H."/>
            <person name="Pitluck S."/>
            <person name="Sims D."/>
            <person name="Brettin T."/>
            <person name="Bruce D."/>
            <person name="Han C."/>
            <person name="Tapia R."/>
            <person name="Gilna P."/>
            <person name="Schmutz J."/>
            <person name="Larimer F."/>
            <person name="Land M."/>
            <person name="Hauser L."/>
            <person name="Kyrpides N."/>
            <person name="Mikhailova N."/>
            <person name="Oremland R.S."/>
            <person name="Hoeft S.E."/>
            <person name="Switzer-Blum J."/>
            <person name="Kulp T."/>
            <person name="King G."/>
            <person name="Tabita R."/>
            <person name="Witte B."/>
            <person name="Santini J.M."/>
            <person name="Basu P."/>
            <person name="Hollibaugh J.T."/>
            <person name="Xie G."/>
            <person name="Stolz J.F."/>
            <person name="Richardson P."/>
        </authorList>
    </citation>
    <scope>NUCLEOTIDE SEQUENCE [LARGE SCALE GENOMIC DNA]</scope>
    <source>
        <strain>ATCC BAA-1101 / DSM 17681 / MLHE-1</strain>
    </source>
</reference>
<gene>
    <name evidence="1" type="primary">tilS</name>
    <name type="ordered locus">Mlg_1842</name>
</gene>
<keyword id="KW-0067">ATP-binding</keyword>
<keyword id="KW-0963">Cytoplasm</keyword>
<keyword id="KW-0436">Ligase</keyword>
<keyword id="KW-0547">Nucleotide-binding</keyword>
<keyword id="KW-1185">Reference proteome</keyword>
<keyword id="KW-0819">tRNA processing</keyword>
<accession>Q0A7K1</accession>
<comment type="function">
    <text evidence="1">Ligates lysine onto the cytidine present at position 34 of the AUA codon-specific tRNA(Ile) that contains the anticodon CAU, in an ATP-dependent manner. Cytidine is converted to lysidine, thus changing the amino acid specificity of the tRNA from methionine to isoleucine.</text>
</comment>
<comment type="catalytic activity">
    <reaction evidence="1">
        <text>cytidine(34) in tRNA(Ile2) + L-lysine + ATP = lysidine(34) in tRNA(Ile2) + AMP + diphosphate + H(+)</text>
        <dbReference type="Rhea" id="RHEA:43744"/>
        <dbReference type="Rhea" id="RHEA-COMP:10625"/>
        <dbReference type="Rhea" id="RHEA-COMP:10670"/>
        <dbReference type="ChEBI" id="CHEBI:15378"/>
        <dbReference type="ChEBI" id="CHEBI:30616"/>
        <dbReference type="ChEBI" id="CHEBI:32551"/>
        <dbReference type="ChEBI" id="CHEBI:33019"/>
        <dbReference type="ChEBI" id="CHEBI:82748"/>
        <dbReference type="ChEBI" id="CHEBI:83665"/>
        <dbReference type="ChEBI" id="CHEBI:456215"/>
        <dbReference type="EC" id="6.3.4.19"/>
    </reaction>
</comment>
<comment type="subcellular location">
    <subcellularLocation>
        <location evidence="1">Cytoplasm</location>
    </subcellularLocation>
</comment>
<comment type="domain">
    <text>The N-terminal region contains the highly conserved SGGXDS motif, predicted to be a P-loop motif involved in ATP binding.</text>
</comment>
<comment type="similarity">
    <text evidence="1">Belongs to the tRNA(Ile)-lysidine synthase family.</text>
</comment>
<evidence type="ECO:0000255" key="1">
    <source>
        <dbReference type="HAMAP-Rule" id="MF_01161"/>
    </source>
</evidence>
<name>TILS_ALKEH</name>
<protein>
    <recommendedName>
        <fullName evidence="1">tRNA(Ile)-lysidine synthase</fullName>
        <ecNumber evidence="1">6.3.4.19</ecNumber>
    </recommendedName>
    <alternativeName>
        <fullName evidence="1">tRNA(Ile)-2-lysyl-cytidine synthase</fullName>
    </alternativeName>
    <alternativeName>
        <fullName evidence="1">tRNA(Ile)-lysidine synthetase</fullName>
    </alternativeName>
</protein>
<organism>
    <name type="scientific">Alkalilimnicola ehrlichii (strain ATCC BAA-1101 / DSM 17681 / MLHE-1)</name>
    <dbReference type="NCBI Taxonomy" id="187272"/>
    <lineage>
        <taxon>Bacteria</taxon>
        <taxon>Pseudomonadati</taxon>
        <taxon>Pseudomonadota</taxon>
        <taxon>Gammaproteobacteria</taxon>
        <taxon>Chromatiales</taxon>
        <taxon>Ectothiorhodospiraceae</taxon>
        <taxon>Alkalilimnicola</taxon>
    </lineage>
</organism>
<proteinExistence type="inferred from homology"/>
<sequence length="445" mass="48871">MAPTPELSPETLARHLAVLGPASGYCVAYSGGLDSTVLLHLMAALSAARELPLRAVHIHHGLQPQADAWAEHCRQQAAALGVDCLVLPVEVRRDSGEGLEAAARQARYAALASHLQSGEALLTAHHADDQAETVLLHLLRGSGPRGLAGMRAQRPLGRGRLLRPLLPWPRERLRAYGDTHALCWVEDPSNAHVAHDRNWLRHTLWPVLTQRWPDASRRVGRAAGEQAEAEALLRELAGEDLARHPPGPGLAVSVLARLSPARARNLVRHWLLMSGLRPPPRARLEQGLADLIRAGRDRQPVLTWPEGELRRYRDRIHRLPAGGPPPWPGPDREWDLRVPLVVPGVGVLRLVRADEGIAPSLIGAEGLSVGRRRRGERCQLAHDPGHRPLSKRFQEAGIPPWERDRVPILRRGEEVVAIANLGTAKRFTARPGYRLICEEHGPDGG</sequence>
<dbReference type="EC" id="6.3.4.19" evidence="1"/>
<dbReference type="EMBL" id="CP000453">
    <property type="protein sequence ID" value="ABI57186.1"/>
    <property type="molecule type" value="Genomic_DNA"/>
</dbReference>
<dbReference type="RefSeq" id="WP_011629580.1">
    <property type="nucleotide sequence ID" value="NC_008340.1"/>
</dbReference>
<dbReference type="SMR" id="Q0A7K1"/>
<dbReference type="KEGG" id="aeh:Mlg_1842"/>
<dbReference type="eggNOG" id="COG0037">
    <property type="taxonomic scope" value="Bacteria"/>
</dbReference>
<dbReference type="HOGENOM" id="CLU_018869_2_0_6"/>
<dbReference type="OrthoDB" id="9807403at2"/>
<dbReference type="Proteomes" id="UP000001962">
    <property type="component" value="Chromosome"/>
</dbReference>
<dbReference type="GO" id="GO:0005737">
    <property type="term" value="C:cytoplasm"/>
    <property type="evidence" value="ECO:0007669"/>
    <property type="project" value="UniProtKB-SubCell"/>
</dbReference>
<dbReference type="GO" id="GO:0005524">
    <property type="term" value="F:ATP binding"/>
    <property type="evidence" value="ECO:0007669"/>
    <property type="project" value="UniProtKB-UniRule"/>
</dbReference>
<dbReference type="GO" id="GO:0032267">
    <property type="term" value="F:tRNA(Ile)-lysidine synthase activity"/>
    <property type="evidence" value="ECO:0007669"/>
    <property type="project" value="UniProtKB-EC"/>
</dbReference>
<dbReference type="GO" id="GO:0006400">
    <property type="term" value="P:tRNA modification"/>
    <property type="evidence" value="ECO:0007669"/>
    <property type="project" value="UniProtKB-UniRule"/>
</dbReference>
<dbReference type="CDD" id="cd01992">
    <property type="entry name" value="TilS_N"/>
    <property type="match status" value="1"/>
</dbReference>
<dbReference type="Gene3D" id="1.20.59.20">
    <property type="match status" value="1"/>
</dbReference>
<dbReference type="Gene3D" id="3.40.50.620">
    <property type="entry name" value="HUPs"/>
    <property type="match status" value="1"/>
</dbReference>
<dbReference type="HAMAP" id="MF_01161">
    <property type="entry name" value="tRNA_Ile_lys_synt"/>
    <property type="match status" value="1"/>
</dbReference>
<dbReference type="InterPro" id="IPR012796">
    <property type="entry name" value="Lysidine-tRNA-synth_C"/>
</dbReference>
<dbReference type="InterPro" id="IPR014729">
    <property type="entry name" value="Rossmann-like_a/b/a_fold"/>
</dbReference>
<dbReference type="InterPro" id="IPR011063">
    <property type="entry name" value="TilS/TtcA_N"/>
</dbReference>
<dbReference type="InterPro" id="IPR012094">
    <property type="entry name" value="tRNA_Ile_lys_synt"/>
</dbReference>
<dbReference type="InterPro" id="IPR012795">
    <property type="entry name" value="tRNA_Ile_lys_synt_N"/>
</dbReference>
<dbReference type="InterPro" id="IPR015262">
    <property type="entry name" value="tRNA_Ile_lys_synt_subst-bd"/>
</dbReference>
<dbReference type="NCBIfam" id="TIGR02433">
    <property type="entry name" value="lysidine_TilS_C"/>
    <property type="match status" value="1"/>
</dbReference>
<dbReference type="NCBIfam" id="TIGR02432">
    <property type="entry name" value="lysidine_TilS_N"/>
    <property type="match status" value="1"/>
</dbReference>
<dbReference type="PANTHER" id="PTHR43033">
    <property type="entry name" value="TRNA(ILE)-LYSIDINE SYNTHASE-RELATED"/>
    <property type="match status" value="1"/>
</dbReference>
<dbReference type="PANTHER" id="PTHR43033:SF1">
    <property type="entry name" value="TRNA(ILE)-LYSIDINE SYNTHASE-RELATED"/>
    <property type="match status" value="1"/>
</dbReference>
<dbReference type="Pfam" id="PF01171">
    <property type="entry name" value="ATP_bind_3"/>
    <property type="match status" value="1"/>
</dbReference>
<dbReference type="Pfam" id="PF09179">
    <property type="entry name" value="TilS"/>
    <property type="match status" value="1"/>
</dbReference>
<dbReference type="Pfam" id="PF11734">
    <property type="entry name" value="TilS_C"/>
    <property type="match status" value="1"/>
</dbReference>
<dbReference type="SMART" id="SM00977">
    <property type="entry name" value="TilS_C"/>
    <property type="match status" value="1"/>
</dbReference>
<dbReference type="SUPFAM" id="SSF52402">
    <property type="entry name" value="Adenine nucleotide alpha hydrolases-like"/>
    <property type="match status" value="1"/>
</dbReference>
<dbReference type="SUPFAM" id="SSF82829">
    <property type="entry name" value="MesJ substrate recognition domain-like"/>
    <property type="match status" value="1"/>
</dbReference>
<dbReference type="SUPFAM" id="SSF56037">
    <property type="entry name" value="PheT/TilS domain"/>
    <property type="match status" value="1"/>
</dbReference>